<protein>
    <recommendedName>
        <fullName evidence="1">Phosphoglucosamine mutase</fullName>
        <ecNumber evidence="1">5.4.2.10</ecNumber>
    </recommendedName>
</protein>
<sequence length="449" mass="48873">MGRMFGTDGVRGVANKELTADLAYKLGKAGAFILTEGAHRPKILVGMDTRISGDMLESALVAGILSVGAEAICVGVIPTPAIAYLTRKYNADAGVVISASHNPVEYNGIKFFNKNGYKLSDELEDSIQALIKDDFKGVPVLTGENIGRKIEEDGEAIRDYIDFAKSTIKGDLKGLKVALDCANGASYITSVEAFKELGAEVHVINNKPDGININRNSGSTHPEDLMEYVVKNNCHMGLAFDGDADRCLAIDEKGNLINGDFILAICGKELKKQGRLKKNTIVVTVMSNLGLDIAMKKEEINTIKTKVGDRYVLEEMLKNDYAIGGEQSGHIIFSDYNTTGDGLVTALQLAHIVKERGKTFSELCSIMKELPQVLVNAKVPNDQKDIYLKDEEIKSEIDTITKNLDGSGRVLIRPSGTEPLVRVMLEGENQEEIDKLAHSLAKLIENKVK</sequence>
<name>GLMM_CLOB6</name>
<comment type="function">
    <text evidence="1">Catalyzes the conversion of glucosamine-6-phosphate to glucosamine-1-phosphate.</text>
</comment>
<comment type="catalytic activity">
    <reaction evidence="1">
        <text>alpha-D-glucosamine 1-phosphate = D-glucosamine 6-phosphate</text>
        <dbReference type="Rhea" id="RHEA:23424"/>
        <dbReference type="ChEBI" id="CHEBI:58516"/>
        <dbReference type="ChEBI" id="CHEBI:58725"/>
        <dbReference type="EC" id="5.4.2.10"/>
    </reaction>
</comment>
<comment type="cofactor">
    <cofactor evidence="1">
        <name>Mg(2+)</name>
        <dbReference type="ChEBI" id="CHEBI:18420"/>
    </cofactor>
    <text evidence="1">Binds 1 Mg(2+) ion per subunit.</text>
</comment>
<comment type="PTM">
    <text evidence="1">Activated by phosphorylation.</text>
</comment>
<comment type="similarity">
    <text evidence="1">Belongs to the phosphohexose mutase family.</text>
</comment>
<gene>
    <name evidence="1" type="primary">glmM</name>
    <name type="ordered locus">CLJ_B3727</name>
</gene>
<accession>C3KVJ0</accession>
<evidence type="ECO:0000255" key="1">
    <source>
        <dbReference type="HAMAP-Rule" id="MF_01554"/>
    </source>
</evidence>
<feature type="chain" id="PRO_1000215483" description="Phosphoglucosamine mutase">
    <location>
        <begin position="1"/>
        <end position="449"/>
    </location>
</feature>
<feature type="active site" description="Phosphoserine intermediate" evidence="1">
    <location>
        <position position="100"/>
    </location>
</feature>
<feature type="binding site" description="via phosphate group" evidence="1">
    <location>
        <position position="100"/>
    </location>
    <ligand>
        <name>Mg(2+)</name>
        <dbReference type="ChEBI" id="CHEBI:18420"/>
    </ligand>
</feature>
<feature type="binding site" evidence="1">
    <location>
        <position position="241"/>
    </location>
    <ligand>
        <name>Mg(2+)</name>
        <dbReference type="ChEBI" id="CHEBI:18420"/>
    </ligand>
</feature>
<feature type="binding site" evidence="1">
    <location>
        <position position="243"/>
    </location>
    <ligand>
        <name>Mg(2+)</name>
        <dbReference type="ChEBI" id="CHEBI:18420"/>
    </ligand>
</feature>
<feature type="binding site" evidence="1">
    <location>
        <position position="245"/>
    </location>
    <ligand>
        <name>Mg(2+)</name>
        <dbReference type="ChEBI" id="CHEBI:18420"/>
    </ligand>
</feature>
<feature type="modified residue" description="Phosphoserine" evidence="1">
    <location>
        <position position="100"/>
    </location>
</feature>
<organism>
    <name type="scientific">Clostridium botulinum (strain 657 / Type Ba4)</name>
    <dbReference type="NCBI Taxonomy" id="515621"/>
    <lineage>
        <taxon>Bacteria</taxon>
        <taxon>Bacillati</taxon>
        <taxon>Bacillota</taxon>
        <taxon>Clostridia</taxon>
        <taxon>Eubacteriales</taxon>
        <taxon>Clostridiaceae</taxon>
        <taxon>Clostridium</taxon>
    </lineage>
</organism>
<proteinExistence type="inferred from homology"/>
<dbReference type="EC" id="5.4.2.10" evidence="1"/>
<dbReference type="EMBL" id="CP001083">
    <property type="protein sequence ID" value="ACQ53078.1"/>
    <property type="molecule type" value="Genomic_DNA"/>
</dbReference>
<dbReference type="RefSeq" id="WP_003360241.1">
    <property type="nucleotide sequence ID" value="NC_012658.1"/>
</dbReference>
<dbReference type="SMR" id="C3KVJ0"/>
<dbReference type="KEGG" id="cbi:CLJ_B3727"/>
<dbReference type="HOGENOM" id="CLU_016950_7_0_9"/>
<dbReference type="Proteomes" id="UP000002333">
    <property type="component" value="Chromosome"/>
</dbReference>
<dbReference type="GO" id="GO:0005829">
    <property type="term" value="C:cytosol"/>
    <property type="evidence" value="ECO:0007669"/>
    <property type="project" value="TreeGrafter"/>
</dbReference>
<dbReference type="GO" id="GO:0000287">
    <property type="term" value="F:magnesium ion binding"/>
    <property type="evidence" value="ECO:0007669"/>
    <property type="project" value="UniProtKB-UniRule"/>
</dbReference>
<dbReference type="GO" id="GO:0008966">
    <property type="term" value="F:phosphoglucosamine mutase activity"/>
    <property type="evidence" value="ECO:0007669"/>
    <property type="project" value="UniProtKB-UniRule"/>
</dbReference>
<dbReference type="GO" id="GO:0004615">
    <property type="term" value="F:phosphomannomutase activity"/>
    <property type="evidence" value="ECO:0007669"/>
    <property type="project" value="TreeGrafter"/>
</dbReference>
<dbReference type="GO" id="GO:0005975">
    <property type="term" value="P:carbohydrate metabolic process"/>
    <property type="evidence" value="ECO:0007669"/>
    <property type="project" value="InterPro"/>
</dbReference>
<dbReference type="GO" id="GO:0009252">
    <property type="term" value="P:peptidoglycan biosynthetic process"/>
    <property type="evidence" value="ECO:0007669"/>
    <property type="project" value="TreeGrafter"/>
</dbReference>
<dbReference type="GO" id="GO:0006048">
    <property type="term" value="P:UDP-N-acetylglucosamine biosynthetic process"/>
    <property type="evidence" value="ECO:0007669"/>
    <property type="project" value="TreeGrafter"/>
</dbReference>
<dbReference type="CDD" id="cd05802">
    <property type="entry name" value="GlmM"/>
    <property type="match status" value="1"/>
</dbReference>
<dbReference type="FunFam" id="3.30.310.50:FF:000001">
    <property type="entry name" value="Phosphoglucosamine mutase"/>
    <property type="match status" value="1"/>
</dbReference>
<dbReference type="FunFam" id="3.40.120.10:FF:000001">
    <property type="entry name" value="Phosphoglucosamine mutase"/>
    <property type="match status" value="1"/>
</dbReference>
<dbReference type="FunFam" id="3.40.120.10:FF:000002">
    <property type="entry name" value="Phosphoglucosamine mutase"/>
    <property type="match status" value="1"/>
</dbReference>
<dbReference type="Gene3D" id="3.40.120.10">
    <property type="entry name" value="Alpha-D-Glucose-1,6-Bisphosphate, subunit A, domain 3"/>
    <property type="match status" value="3"/>
</dbReference>
<dbReference type="Gene3D" id="3.30.310.50">
    <property type="entry name" value="Alpha-D-phosphohexomutase, C-terminal domain"/>
    <property type="match status" value="1"/>
</dbReference>
<dbReference type="HAMAP" id="MF_01554_B">
    <property type="entry name" value="GlmM_B"/>
    <property type="match status" value="1"/>
</dbReference>
<dbReference type="InterPro" id="IPR005844">
    <property type="entry name" value="A-D-PHexomutase_a/b/a-I"/>
</dbReference>
<dbReference type="InterPro" id="IPR016055">
    <property type="entry name" value="A-D-PHexomutase_a/b/a-I/II/III"/>
</dbReference>
<dbReference type="InterPro" id="IPR005845">
    <property type="entry name" value="A-D-PHexomutase_a/b/a-II"/>
</dbReference>
<dbReference type="InterPro" id="IPR005846">
    <property type="entry name" value="A-D-PHexomutase_a/b/a-III"/>
</dbReference>
<dbReference type="InterPro" id="IPR005843">
    <property type="entry name" value="A-D-PHexomutase_C"/>
</dbReference>
<dbReference type="InterPro" id="IPR036900">
    <property type="entry name" value="A-D-PHexomutase_C_sf"/>
</dbReference>
<dbReference type="InterPro" id="IPR016066">
    <property type="entry name" value="A-D-PHexomutase_CS"/>
</dbReference>
<dbReference type="InterPro" id="IPR005841">
    <property type="entry name" value="Alpha-D-phosphohexomutase_SF"/>
</dbReference>
<dbReference type="InterPro" id="IPR006352">
    <property type="entry name" value="GlmM_bact"/>
</dbReference>
<dbReference type="InterPro" id="IPR050060">
    <property type="entry name" value="Phosphoglucosamine_mutase"/>
</dbReference>
<dbReference type="NCBIfam" id="TIGR01455">
    <property type="entry name" value="glmM"/>
    <property type="match status" value="1"/>
</dbReference>
<dbReference type="NCBIfam" id="NF008139">
    <property type="entry name" value="PRK10887.1"/>
    <property type="match status" value="1"/>
</dbReference>
<dbReference type="PANTHER" id="PTHR42946:SF1">
    <property type="entry name" value="PHOSPHOGLUCOMUTASE (ALPHA-D-GLUCOSE-1,6-BISPHOSPHATE-DEPENDENT)"/>
    <property type="match status" value="1"/>
</dbReference>
<dbReference type="PANTHER" id="PTHR42946">
    <property type="entry name" value="PHOSPHOHEXOSE MUTASE"/>
    <property type="match status" value="1"/>
</dbReference>
<dbReference type="Pfam" id="PF02878">
    <property type="entry name" value="PGM_PMM_I"/>
    <property type="match status" value="1"/>
</dbReference>
<dbReference type="Pfam" id="PF02879">
    <property type="entry name" value="PGM_PMM_II"/>
    <property type="match status" value="1"/>
</dbReference>
<dbReference type="Pfam" id="PF02880">
    <property type="entry name" value="PGM_PMM_III"/>
    <property type="match status" value="1"/>
</dbReference>
<dbReference type="Pfam" id="PF00408">
    <property type="entry name" value="PGM_PMM_IV"/>
    <property type="match status" value="1"/>
</dbReference>
<dbReference type="PRINTS" id="PR00509">
    <property type="entry name" value="PGMPMM"/>
</dbReference>
<dbReference type="SUPFAM" id="SSF55957">
    <property type="entry name" value="Phosphoglucomutase, C-terminal domain"/>
    <property type="match status" value="1"/>
</dbReference>
<dbReference type="SUPFAM" id="SSF53738">
    <property type="entry name" value="Phosphoglucomutase, first 3 domains"/>
    <property type="match status" value="3"/>
</dbReference>
<dbReference type="PROSITE" id="PS00710">
    <property type="entry name" value="PGM_PMM"/>
    <property type="match status" value="1"/>
</dbReference>
<reference key="1">
    <citation type="submission" date="2008-05" db="EMBL/GenBank/DDBJ databases">
        <title>Genome sequence of Clostridium botulinum Ba4 strain 657.</title>
        <authorList>
            <person name="Shrivastava S."/>
            <person name="Brown J.L."/>
            <person name="Bruce D."/>
            <person name="Detter C."/>
            <person name="Munk C."/>
            <person name="Smith L.A."/>
            <person name="Smith T.J."/>
            <person name="Sutton G."/>
            <person name="Brettin T.S."/>
        </authorList>
    </citation>
    <scope>NUCLEOTIDE SEQUENCE [LARGE SCALE GENOMIC DNA]</scope>
    <source>
        <strain>657 / Type Ba4</strain>
    </source>
</reference>
<keyword id="KW-0413">Isomerase</keyword>
<keyword id="KW-0460">Magnesium</keyword>
<keyword id="KW-0479">Metal-binding</keyword>
<keyword id="KW-0597">Phosphoprotein</keyword>